<comment type="function">
    <text evidence="1">F(1)F(0) ATP synthase produces ATP from ADP in the presence of a proton or sodium gradient. F-type ATPases consist of two structural domains, F(1) containing the extramembraneous catalytic core and F(0) containing the membrane proton channel, linked together by a central stalk and a peripheral stalk. During catalysis, ATP synthesis in the catalytic domain of F(1) is coupled via a rotary mechanism of the central stalk subunits to proton translocation.</text>
</comment>
<comment type="function">
    <text evidence="1">Component of the F(0) channel, it forms part of the peripheral stalk, linking F(1) to F(0). The b'-subunit is a diverged and duplicated form of b found in plants and photosynthetic bacteria.</text>
</comment>
<comment type="subunit">
    <text evidence="1">F-type ATPases have 2 components, F(1) - the catalytic core - and F(0) - the membrane proton channel. F(1) has five subunits: alpha(3), beta(3), gamma(1), delta(1), epsilon(1). F(0) has four main subunits: a(1), b(1), b'(1) and c(10-14). The alpha and beta chains form an alternating ring which encloses part of the gamma chain. F(1) is attached to F(0) by a central stalk formed by the gamma and epsilon chains, while a peripheral stalk is formed by the delta, b and b' chains.</text>
</comment>
<comment type="subcellular location">
    <subcellularLocation>
        <location evidence="1">Cellular thylakoid membrane</location>
        <topology evidence="1">Single-pass membrane protein</topology>
    </subcellularLocation>
</comment>
<comment type="similarity">
    <text evidence="1">Belongs to the ATPase B chain family.</text>
</comment>
<sequence length="142" mass="15986">MFDFNGTLPLMMFQFFLLVAVLNAVFFKPLTQAIDERDGFIRTNNTEARERLAKAKSLTEQYEQELAGTRKQSQQVLADAQAEAQKIAQTQITEAQKQVQAEVMKAQAELESQKQSAFSELEKQVDTLSQQILNKLLGSTLA</sequence>
<organism>
    <name type="scientific">Acaryochloris marina (strain MBIC 11017)</name>
    <dbReference type="NCBI Taxonomy" id="329726"/>
    <lineage>
        <taxon>Bacteria</taxon>
        <taxon>Bacillati</taxon>
        <taxon>Cyanobacteriota</taxon>
        <taxon>Cyanophyceae</taxon>
        <taxon>Acaryochloridales</taxon>
        <taxon>Acaryochloridaceae</taxon>
        <taxon>Acaryochloris</taxon>
    </lineage>
</organism>
<reference key="1">
    <citation type="journal article" date="2008" name="Proc. Natl. Acad. Sci. U.S.A.">
        <title>Niche adaptation and genome expansion in the chlorophyll d-producing cyanobacterium Acaryochloris marina.</title>
        <authorList>
            <person name="Swingley W.D."/>
            <person name="Chen M."/>
            <person name="Cheung P.C."/>
            <person name="Conrad A.L."/>
            <person name="Dejesa L.C."/>
            <person name="Hao J."/>
            <person name="Honchak B.M."/>
            <person name="Karbach L.E."/>
            <person name="Kurdoglu A."/>
            <person name="Lahiri S."/>
            <person name="Mastrian S.D."/>
            <person name="Miyashita H."/>
            <person name="Page L."/>
            <person name="Ramakrishna P."/>
            <person name="Satoh S."/>
            <person name="Sattley W.M."/>
            <person name="Shimada Y."/>
            <person name="Taylor H.L."/>
            <person name="Tomo T."/>
            <person name="Tsuchiya T."/>
            <person name="Wang Z.T."/>
            <person name="Raymond J."/>
            <person name="Mimuro M."/>
            <person name="Blankenship R.E."/>
            <person name="Touchman J.W."/>
        </authorList>
    </citation>
    <scope>NUCLEOTIDE SEQUENCE [LARGE SCALE GENOMIC DNA]</scope>
    <source>
        <strain>MBIC 11017</strain>
    </source>
</reference>
<accession>B0BZK9</accession>
<evidence type="ECO:0000255" key="1">
    <source>
        <dbReference type="HAMAP-Rule" id="MF_01399"/>
    </source>
</evidence>
<name>ATPF2_ACAM1</name>
<feature type="chain" id="PRO_0000368996" description="ATP synthase subunit b'">
    <location>
        <begin position="1"/>
        <end position="142"/>
    </location>
</feature>
<feature type="transmembrane region" description="Helical" evidence="1">
    <location>
        <begin position="7"/>
        <end position="27"/>
    </location>
</feature>
<proteinExistence type="inferred from homology"/>
<keyword id="KW-0066">ATP synthesis</keyword>
<keyword id="KW-0138">CF(0)</keyword>
<keyword id="KW-0375">Hydrogen ion transport</keyword>
<keyword id="KW-0406">Ion transport</keyword>
<keyword id="KW-0472">Membrane</keyword>
<keyword id="KW-1185">Reference proteome</keyword>
<keyword id="KW-0793">Thylakoid</keyword>
<keyword id="KW-0812">Transmembrane</keyword>
<keyword id="KW-1133">Transmembrane helix</keyword>
<keyword id="KW-0813">Transport</keyword>
<gene>
    <name evidence="1" type="primary">atpF2</name>
    <name evidence="1" type="synonym">atpG</name>
    <name type="ordered locus">AM1_0893</name>
</gene>
<dbReference type="EMBL" id="CP000828">
    <property type="protein sequence ID" value="ABW25935.1"/>
    <property type="molecule type" value="Genomic_DNA"/>
</dbReference>
<dbReference type="RefSeq" id="WP_010468091.1">
    <property type="nucleotide sequence ID" value="NC_009925.1"/>
</dbReference>
<dbReference type="SMR" id="B0BZK9"/>
<dbReference type="STRING" id="329726.AM1_0893"/>
<dbReference type="KEGG" id="amr:AM1_0893"/>
<dbReference type="eggNOG" id="COG0711">
    <property type="taxonomic scope" value="Bacteria"/>
</dbReference>
<dbReference type="HOGENOM" id="CLU_079215_9_0_3"/>
<dbReference type="OrthoDB" id="426571at2"/>
<dbReference type="Proteomes" id="UP000000268">
    <property type="component" value="Chromosome"/>
</dbReference>
<dbReference type="GO" id="GO:0031676">
    <property type="term" value="C:plasma membrane-derived thylakoid membrane"/>
    <property type="evidence" value="ECO:0007669"/>
    <property type="project" value="UniProtKB-SubCell"/>
</dbReference>
<dbReference type="GO" id="GO:0045259">
    <property type="term" value="C:proton-transporting ATP synthase complex"/>
    <property type="evidence" value="ECO:0007669"/>
    <property type="project" value="UniProtKB-KW"/>
</dbReference>
<dbReference type="GO" id="GO:0046933">
    <property type="term" value="F:proton-transporting ATP synthase activity, rotational mechanism"/>
    <property type="evidence" value="ECO:0007669"/>
    <property type="project" value="UniProtKB-UniRule"/>
</dbReference>
<dbReference type="GO" id="GO:0046961">
    <property type="term" value="F:proton-transporting ATPase activity, rotational mechanism"/>
    <property type="evidence" value="ECO:0007669"/>
    <property type="project" value="TreeGrafter"/>
</dbReference>
<dbReference type="CDD" id="cd06503">
    <property type="entry name" value="ATP-synt_Fo_b"/>
    <property type="match status" value="1"/>
</dbReference>
<dbReference type="Gene3D" id="1.10.287.210">
    <property type="match status" value="1"/>
</dbReference>
<dbReference type="HAMAP" id="MF_01398">
    <property type="entry name" value="ATP_synth_b_bprime"/>
    <property type="match status" value="1"/>
</dbReference>
<dbReference type="HAMAP" id="MF_01399">
    <property type="entry name" value="ATP_synth_bprime"/>
    <property type="match status" value="1"/>
</dbReference>
<dbReference type="InterPro" id="IPR034679">
    <property type="entry name" value="ATP_synth_b"/>
</dbReference>
<dbReference type="InterPro" id="IPR002146">
    <property type="entry name" value="ATP_synth_b/b'su_bac/chlpt"/>
</dbReference>
<dbReference type="InterPro" id="IPR050059">
    <property type="entry name" value="ATP_synthase_B_chain"/>
</dbReference>
<dbReference type="NCBIfam" id="NF005607">
    <property type="entry name" value="PRK07353.1"/>
    <property type="match status" value="1"/>
</dbReference>
<dbReference type="PANTHER" id="PTHR33445">
    <property type="entry name" value="ATP SYNTHASE SUBUNIT B', CHLOROPLASTIC"/>
    <property type="match status" value="1"/>
</dbReference>
<dbReference type="PANTHER" id="PTHR33445:SF2">
    <property type="entry name" value="ATP SYNTHASE SUBUNIT B', CHLOROPLASTIC"/>
    <property type="match status" value="1"/>
</dbReference>
<dbReference type="Pfam" id="PF00430">
    <property type="entry name" value="ATP-synt_B"/>
    <property type="match status" value="1"/>
</dbReference>
<protein>
    <recommendedName>
        <fullName evidence="1">ATP synthase subunit b'</fullName>
    </recommendedName>
    <alternativeName>
        <fullName evidence="1">ATP synthase F(0) sector subunit b'</fullName>
    </alternativeName>
    <alternativeName>
        <fullName evidence="1">ATPase subunit II</fullName>
    </alternativeName>
    <alternativeName>
        <fullName evidence="1">F-type ATPase subunit b'</fullName>
        <shortName evidence="1">F-ATPase subunit b'</shortName>
    </alternativeName>
</protein>